<reference key="1">
    <citation type="journal article" date="2005" name="Nucleic Acids Res.">
        <title>Genome dynamics and diversity of Shigella species, the etiologic agents of bacillary dysentery.</title>
        <authorList>
            <person name="Yang F."/>
            <person name="Yang J."/>
            <person name="Zhang X."/>
            <person name="Chen L."/>
            <person name="Jiang Y."/>
            <person name="Yan Y."/>
            <person name="Tang X."/>
            <person name="Wang J."/>
            <person name="Xiong Z."/>
            <person name="Dong J."/>
            <person name="Xue Y."/>
            <person name="Zhu Y."/>
            <person name="Xu X."/>
            <person name="Sun L."/>
            <person name="Chen S."/>
            <person name="Nie H."/>
            <person name="Peng J."/>
            <person name="Xu J."/>
            <person name="Wang Y."/>
            <person name="Yuan Z."/>
            <person name="Wen Y."/>
            <person name="Yao Z."/>
            <person name="Shen Y."/>
            <person name="Qiang B."/>
            <person name="Hou Y."/>
            <person name="Yu J."/>
            <person name="Jin Q."/>
        </authorList>
    </citation>
    <scope>NUCLEOTIDE SEQUENCE [LARGE SCALE GENOMIC DNA]</scope>
    <source>
        <strain>Ss046</strain>
    </source>
</reference>
<evidence type="ECO:0000255" key="1">
    <source>
        <dbReference type="HAMAP-Rule" id="MF_01393"/>
    </source>
</evidence>
<dbReference type="EMBL" id="CP000038">
    <property type="protein sequence ID" value="AAZ90420.1"/>
    <property type="molecule type" value="Genomic_DNA"/>
</dbReference>
<dbReference type="RefSeq" id="WP_000135625.1">
    <property type="nucleotide sequence ID" value="NC_007384.1"/>
</dbReference>
<dbReference type="SMR" id="Q3YVP2"/>
<dbReference type="GeneID" id="93778229"/>
<dbReference type="KEGG" id="ssn:SSON_3881"/>
<dbReference type="HOGENOM" id="CLU_041018_1_0_6"/>
<dbReference type="Proteomes" id="UP000002529">
    <property type="component" value="Chromosome"/>
</dbReference>
<dbReference type="GO" id="GO:0005886">
    <property type="term" value="C:plasma membrane"/>
    <property type="evidence" value="ECO:0007669"/>
    <property type="project" value="UniProtKB-SubCell"/>
</dbReference>
<dbReference type="GO" id="GO:0045259">
    <property type="term" value="C:proton-transporting ATP synthase complex"/>
    <property type="evidence" value="ECO:0007669"/>
    <property type="project" value="UniProtKB-KW"/>
</dbReference>
<dbReference type="GO" id="GO:0046933">
    <property type="term" value="F:proton-transporting ATP synthase activity, rotational mechanism"/>
    <property type="evidence" value="ECO:0007669"/>
    <property type="project" value="UniProtKB-UniRule"/>
</dbReference>
<dbReference type="GO" id="GO:0042777">
    <property type="term" value="P:proton motive force-driven plasma membrane ATP synthesis"/>
    <property type="evidence" value="ECO:0007669"/>
    <property type="project" value="TreeGrafter"/>
</dbReference>
<dbReference type="CDD" id="cd00310">
    <property type="entry name" value="ATP-synt_Fo_a_6"/>
    <property type="match status" value="1"/>
</dbReference>
<dbReference type="FunFam" id="1.20.120.220:FF:000002">
    <property type="entry name" value="ATP synthase subunit a"/>
    <property type="match status" value="1"/>
</dbReference>
<dbReference type="Gene3D" id="1.20.120.220">
    <property type="entry name" value="ATP synthase, F0 complex, subunit A"/>
    <property type="match status" value="1"/>
</dbReference>
<dbReference type="HAMAP" id="MF_01393">
    <property type="entry name" value="ATP_synth_a_bact"/>
    <property type="match status" value="1"/>
</dbReference>
<dbReference type="InterPro" id="IPR045082">
    <property type="entry name" value="ATP_syn_F0_a_bact/chloroplast"/>
</dbReference>
<dbReference type="InterPro" id="IPR000568">
    <property type="entry name" value="ATP_synth_F0_asu"/>
</dbReference>
<dbReference type="InterPro" id="IPR023011">
    <property type="entry name" value="ATP_synth_F0_asu_AS"/>
</dbReference>
<dbReference type="InterPro" id="IPR035908">
    <property type="entry name" value="F0_ATP_A_sf"/>
</dbReference>
<dbReference type="NCBIfam" id="TIGR01131">
    <property type="entry name" value="ATP_synt_6_or_A"/>
    <property type="match status" value="1"/>
</dbReference>
<dbReference type="NCBIfam" id="NF004477">
    <property type="entry name" value="PRK05815.1-1"/>
    <property type="match status" value="1"/>
</dbReference>
<dbReference type="PANTHER" id="PTHR42823">
    <property type="entry name" value="ATP SYNTHASE SUBUNIT A, CHLOROPLASTIC"/>
    <property type="match status" value="1"/>
</dbReference>
<dbReference type="PANTHER" id="PTHR42823:SF3">
    <property type="entry name" value="ATP SYNTHASE SUBUNIT A, CHLOROPLASTIC"/>
    <property type="match status" value="1"/>
</dbReference>
<dbReference type="Pfam" id="PF00119">
    <property type="entry name" value="ATP-synt_A"/>
    <property type="match status" value="1"/>
</dbReference>
<dbReference type="PRINTS" id="PR00123">
    <property type="entry name" value="ATPASEA"/>
</dbReference>
<dbReference type="SUPFAM" id="SSF81336">
    <property type="entry name" value="F1F0 ATP synthase subunit A"/>
    <property type="match status" value="1"/>
</dbReference>
<dbReference type="PROSITE" id="PS00449">
    <property type="entry name" value="ATPASE_A"/>
    <property type="match status" value="1"/>
</dbReference>
<protein>
    <recommendedName>
        <fullName evidence="1">ATP synthase subunit a</fullName>
    </recommendedName>
    <alternativeName>
        <fullName evidence="1">ATP synthase F0 sector subunit a</fullName>
    </alternativeName>
    <alternativeName>
        <fullName evidence="1">F-ATPase subunit 6</fullName>
    </alternativeName>
</protein>
<sequence length="271" mass="30303">MASENMTPQDYIGHHLNNLQLDLRTFSLVDPQNPPATFWTINIDSMFFSVVLGLLFLVLFRSVAKKATSGVPGKFQTAIELVIGFVNGSVKDMYHGKSKLIAPLALTIFVWVFLMNLMDLLPIDLLPYIAEHVLGLPALRVVPSADVNVTLSMALGVFILILFYSIKMKGIGGFTKELTLQPFNHWAFIPVNLILEGVSLLSKPVSLGLRLFGNMYAGELIFILIAGLLPWWSQWILNVPWAIFHILIITLQAFIFMVLTIVYLSMASEEH</sequence>
<organism>
    <name type="scientific">Shigella sonnei (strain Ss046)</name>
    <dbReference type="NCBI Taxonomy" id="300269"/>
    <lineage>
        <taxon>Bacteria</taxon>
        <taxon>Pseudomonadati</taxon>
        <taxon>Pseudomonadota</taxon>
        <taxon>Gammaproteobacteria</taxon>
        <taxon>Enterobacterales</taxon>
        <taxon>Enterobacteriaceae</taxon>
        <taxon>Shigella</taxon>
    </lineage>
</organism>
<proteinExistence type="inferred from homology"/>
<feature type="chain" id="PRO_0000362468" description="ATP synthase subunit a">
    <location>
        <begin position="1"/>
        <end position="271"/>
    </location>
</feature>
<feature type="transmembrane region" description="Helical" evidence="1">
    <location>
        <begin position="40"/>
        <end position="60"/>
    </location>
</feature>
<feature type="transmembrane region" description="Helical" evidence="1">
    <location>
        <begin position="100"/>
        <end position="120"/>
    </location>
</feature>
<feature type="transmembrane region" description="Helical" evidence="1">
    <location>
        <begin position="146"/>
        <end position="166"/>
    </location>
</feature>
<feature type="transmembrane region" description="Helical" evidence="1">
    <location>
        <begin position="220"/>
        <end position="240"/>
    </location>
</feature>
<feature type="transmembrane region" description="Helical" evidence="1">
    <location>
        <begin position="242"/>
        <end position="262"/>
    </location>
</feature>
<gene>
    <name evidence="1" type="primary">atpB</name>
    <name type="ordered locus">SSON_3881</name>
</gene>
<name>ATP6_SHISS</name>
<keyword id="KW-0066">ATP synthesis</keyword>
<keyword id="KW-0997">Cell inner membrane</keyword>
<keyword id="KW-1003">Cell membrane</keyword>
<keyword id="KW-0138">CF(0)</keyword>
<keyword id="KW-0375">Hydrogen ion transport</keyword>
<keyword id="KW-0406">Ion transport</keyword>
<keyword id="KW-0472">Membrane</keyword>
<keyword id="KW-1185">Reference proteome</keyword>
<keyword id="KW-0812">Transmembrane</keyword>
<keyword id="KW-1133">Transmembrane helix</keyword>
<keyword id="KW-0813">Transport</keyword>
<comment type="function">
    <text evidence="1">Key component of the proton channel; it plays a direct role in the translocation of protons across the membrane.</text>
</comment>
<comment type="subunit">
    <text evidence="1">F-type ATPases have 2 components, CF(1) - the catalytic core - and CF(0) - the membrane proton channel. CF(1) has five subunits: alpha(3), beta(3), gamma(1), delta(1), epsilon(1). CF(0) has three main subunits: a(1), b(2) and c(9-12). The alpha and beta chains form an alternating ring which encloses part of the gamma chain. CF(1) is attached to CF(0) by a central stalk formed by the gamma and epsilon chains, while a peripheral stalk is formed by the delta and b chains.</text>
</comment>
<comment type="subcellular location">
    <subcellularLocation>
        <location evidence="1">Cell inner membrane</location>
        <topology evidence="1">Multi-pass membrane protein</topology>
    </subcellularLocation>
</comment>
<comment type="similarity">
    <text evidence="1">Belongs to the ATPase A chain family.</text>
</comment>
<accession>Q3YVP2</accession>